<accession>P51281</accession>
<sequence length="565" mass="64172">MLIADDLEKLLEILPHFVREPLKQHSNRKNLIEVVMDLGRRPEARFPGNPEYLSQRSISWQDLDYCVKKVGNFSGDNRAGIEKTLHRISSMRNREGSIIGLTCRVGRAVFGTISIIRDLLEQGDSILLLGKPGVGKTTAVREIARVLSDEMEKRVVIIDTSNEIAGDGDIPHPAIGRARRMQVAQPDLQHQVMIEAVENHMPEVIIIDEIGTELEALAARTIAERGVQLVGTAHGNYLESLIKNPTLADLIGGIQYVTLGDDEAKRRGTQKSILERKAAPAFQIAIEIHDRKAWIVHEKVEETIDQILQGHQPFVQKRQIQDNGRILIKCYPSQSTEVLSTNSSSLQKMSSLKQKTHFLQQREVKNKTFDLNKLENRDTSLLSTTINTPVNINNHSFQVEASIQYLYAYSLSWQHITSVISALDLPIILTKEIEKSDAILALRSQVKQNTKLRQIAKSRQIIIYTIQNSTVPQITRALRKILNINTSSDLNWVKLCKSKKFYEIQALQEAKLAIEIIILNENSIVQLTPRSAYIRKMQHNLIDNYQLRARSFGEEPYRKLRIYPE</sequence>
<reference key="1">
    <citation type="journal article" date="1995" name="Plant Mol. Biol. Rep.">
        <title>Complete nucleotide sequence of the Porphyra purpurea chloroplast genome.</title>
        <authorList>
            <person name="Reith M.E."/>
            <person name="Munholland J."/>
        </authorList>
    </citation>
    <scope>NUCLEOTIDE SEQUENCE [LARGE SCALE GENOMIC DNA]</scope>
    <source>
        <strain>Avonport</strain>
    </source>
</reference>
<evidence type="ECO:0000255" key="1"/>
<evidence type="ECO:0000255" key="2">
    <source>
        <dbReference type="PROSITE-ProRule" id="PRU00382"/>
    </source>
</evidence>
<evidence type="ECO:0000305" key="3"/>
<geneLocation type="chloroplast"/>
<protein>
    <recommendedName>
        <fullName>Uncharacterized protein ycf45</fullName>
    </recommendedName>
    <alternativeName>
        <fullName>ORF565</fullName>
    </alternativeName>
</protein>
<proteinExistence type="inferred from homology"/>
<feature type="chain" id="PRO_0000217367" description="Uncharacterized protein ycf45">
    <location>
        <begin position="1"/>
        <end position="565"/>
    </location>
</feature>
<feature type="domain" description="R3H" evidence="2">
    <location>
        <begin position="503"/>
        <end position="565"/>
    </location>
</feature>
<feature type="binding site" evidence="1">
    <location>
        <begin position="130"/>
        <end position="137"/>
    </location>
    <ligand>
        <name>ATP</name>
        <dbReference type="ChEBI" id="CHEBI:30616"/>
    </ligand>
</feature>
<keyword id="KW-0067">ATP-binding</keyword>
<keyword id="KW-0150">Chloroplast</keyword>
<keyword id="KW-0547">Nucleotide-binding</keyword>
<keyword id="KW-0934">Plastid</keyword>
<organism>
    <name type="scientific">Porphyra purpurea</name>
    <name type="common">Red seaweed</name>
    <name type="synonym">Ulva purpurea</name>
    <dbReference type="NCBI Taxonomy" id="2787"/>
    <lineage>
        <taxon>Eukaryota</taxon>
        <taxon>Rhodophyta</taxon>
        <taxon>Bangiophyceae</taxon>
        <taxon>Bangiales</taxon>
        <taxon>Bangiaceae</taxon>
        <taxon>Porphyra</taxon>
    </lineage>
</organism>
<gene>
    <name type="primary">ycf45</name>
</gene>
<comment type="subcellular location">
    <subcellularLocation>
        <location>Plastid</location>
        <location>Chloroplast</location>
    </subcellularLocation>
</comment>
<comment type="similarity">
    <text evidence="3">Belongs to the ycf45 family.</text>
</comment>
<dbReference type="EMBL" id="U38804">
    <property type="protein sequence ID" value="AAC08167.1"/>
    <property type="molecule type" value="Genomic_DNA"/>
</dbReference>
<dbReference type="PIR" id="S73202">
    <property type="entry name" value="S73202"/>
</dbReference>
<dbReference type="RefSeq" id="NP_053891.1">
    <property type="nucleotide sequence ID" value="NC_000925.1"/>
</dbReference>
<dbReference type="GO" id="GO:0009507">
    <property type="term" value="C:chloroplast"/>
    <property type="evidence" value="ECO:0007669"/>
    <property type="project" value="UniProtKB-SubCell"/>
</dbReference>
<dbReference type="GO" id="GO:0005524">
    <property type="term" value="F:ATP binding"/>
    <property type="evidence" value="ECO:0007669"/>
    <property type="project" value="UniProtKB-KW"/>
</dbReference>
<dbReference type="GO" id="GO:0016887">
    <property type="term" value="F:ATP hydrolysis activity"/>
    <property type="evidence" value="ECO:0007669"/>
    <property type="project" value="InterPro"/>
</dbReference>
<dbReference type="GO" id="GO:0003676">
    <property type="term" value="F:nucleic acid binding"/>
    <property type="evidence" value="ECO:0007669"/>
    <property type="project" value="InterPro"/>
</dbReference>
<dbReference type="CDD" id="cd00009">
    <property type="entry name" value="AAA"/>
    <property type="match status" value="1"/>
</dbReference>
<dbReference type="CDD" id="cd02645">
    <property type="entry name" value="R3H_AAA"/>
    <property type="match status" value="1"/>
</dbReference>
<dbReference type="Gene3D" id="3.40.50.300">
    <property type="entry name" value="P-loop containing nucleotide triphosphate hydrolases"/>
    <property type="match status" value="1"/>
</dbReference>
<dbReference type="InterPro" id="IPR003593">
    <property type="entry name" value="AAA+_ATPase"/>
</dbReference>
<dbReference type="InterPro" id="IPR027417">
    <property type="entry name" value="P-loop_NTPase"/>
</dbReference>
<dbReference type="InterPro" id="IPR034081">
    <property type="entry name" value="R3H_AAA"/>
</dbReference>
<dbReference type="InterPro" id="IPR001374">
    <property type="entry name" value="R3H_dom"/>
</dbReference>
<dbReference type="InterPro" id="IPR036867">
    <property type="entry name" value="R3H_dom_sf"/>
</dbReference>
<dbReference type="InterPro" id="IPR045735">
    <property type="entry name" value="Spore_III_AA_AAA+_ATPase"/>
</dbReference>
<dbReference type="PANTHER" id="PTHR20953">
    <property type="entry name" value="KINASE-RELATED"/>
    <property type="match status" value="1"/>
</dbReference>
<dbReference type="PANTHER" id="PTHR20953:SF3">
    <property type="entry name" value="P-LOOP CONTAINING NUCLEOSIDE TRIPHOSPHATE HYDROLASES SUPERFAMILY PROTEIN"/>
    <property type="match status" value="1"/>
</dbReference>
<dbReference type="Pfam" id="PF01424">
    <property type="entry name" value="R3H"/>
    <property type="match status" value="1"/>
</dbReference>
<dbReference type="Pfam" id="PF19568">
    <property type="entry name" value="Spore_III_AA"/>
    <property type="match status" value="1"/>
</dbReference>
<dbReference type="SMART" id="SM00382">
    <property type="entry name" value="AAA"/>
    <property type="match status" value="1"/>
</dbReference>
<dbReference type="SMART" id="SM00393">
    <property type="entry name" value="R3H"/>
    <property type="match status" value="1"/>
</dbReference>
<dbReference type="SUPFAM" id="SSF52540">
    <property type="entry name" value="P-loop containing nucleoside triphosphate hydrolases"/>
    <property type="match status" value="1"/>
</dbReference>
<dbReference type="SUPFAM" id="SSF82708">
    <property type="entry name" value="R3H domain"/>
    <property type="match status" value="1"/>
</dbReference>
<dbReference type="PROSITE" id="PS51061">
    <property type="entry name" value="R3H"/>
    <property type="match status" value="1"/>
</dbReference>
<name>YCF45_PORPU</name>